<comment type="function">
    <text>Catalyzes the ATP-dependent amination of UTP to CTP with either L-glutamine or ammonia as the source of nitrogen.</text>
</comment>
<comment type="catalytic activity">
    <reaction>
        <text>UTP + L-glutamine + ATP + H2O = CTP + L-glutamate + ADP + phosphate + 2 H(+)</text>
        <dbReference type="Rhea" id="RHEA:26426"/>
        <dbReference type="ChEBI" id="CHEBI:15377"/>
        <dbReference type="ChEBI" id="CHEBI:15378"/>
        <dbReference type="ChEBI" id="CHEBI:29985"/>
        <dbReference type="ChEBI" id="CHEBI:30616"/>
        <dbReference type="ChEBI" id="CHEBI:37563"/>
        <dbReference type="ChEBI" id="CHEBI:43474"/>
        <dbReference type="ChEBI" id="CHEBI:46398"/>
        <dbReference type="ChEBI" id="CHEBI:58359"/>
        <dbReference type="ChEBI" id="CHEBI:456216"/>
        <dbReference type="EC" id="6.3.4.2"/>
    </reaction>
</comment>
<comment type="pathway">
    <text>Pyrimidine metabolism; CTP biosynthesis via de novo pathway; CTP from UDP: step 2/2.</text>
</comment>
<comment type="similarity">
    <text evidence="2">Belongs to the CTP synthase family.</text>
</comment>
<protein>
    <recommendedName>
        <fullName>CTP synthase</fullName>
        <ecNumber>6.3.4.2</ecNumber>
    </recommendedName>
    <alternativeName>
        <fullName>CTP synthetase</fullName>
    </alternativeName>
    <alternativeName>
        <fullName>UTP--ammonia ligase</fullName>
    </alternativeName>
</protein>
<organism>
    <name type="scientific">Eremothecium gossypii (strain ATCC 10895 / CBS 109.51 / FGSC 9923 / NRRL Y-1056)</name>
    <name type="common">Yeast</name>
    <name type="synonym">Ashbya gossypii</name>
    <dbReference type="NCBI Taxonomy" id="284811"/>
    <lineage>
        <taxon>Eukaryota</taxon>
        <taxon>Fungi</taxon>
        <taxon>Dikarya</taxon>
        <taxon>Ascomycota</taxon>
        <taxon>Saccharomycotina</taxon>
        <taxon>Saccharomycetes</taxon>
        <taxon>Saccharomycetales</taxon>
        <taxon>Saccharomycetaceae</taxon>
        <taxon>Eremothecium</taxon>
    </lineage>
</organism>
<evidence type="ECO:0000255" key="1">
    <source>
        <dbReference type="PROSITE-ProRule" id="PRU00605"/>
    </source>
</evidence>
<evidence type="ECO:0000305" key="2"/>
<keyword id="KW-0067">ATP-binding</keyword>
<keyword id="KW-0315">Glutamine amidotransferase</keyword>
<keyword id="KW-0436">Ligase</keyword>
<keyword id="KW-0547">Nucleotide-binding</keyword>
<keyword id="KW-0665">Pyrimidine biosynthesis</keyword>
<keyword id="KW-1185">Reference proteome</keyword>
<proteinExistence type="inferred from homology"/>
<dbReference type="EC" id="6.3.4.2"/>
<dbReference type="EMBL" id="AE016820">
    <property type="protein sequence ID" value="AAS54171.1"/>
    <property type="molecule type" value="Genomic_DNA"/>
</dbReference>
<dbReference type="RefSeq" id="NP_986347.1">
    <property type="nucleotide sequence ID" value="NM_211409.2"/>
</dbReference>
<dbReference type="SMR" id="Q751L7"/>
<dbReference type="FunCoup" id="Q751L7">
    <property type="interactions" value="926"/>
</dbReference>
<dbReference type="STRING" id="284811.Q751L7"/>
<dbReference type="EnsemblFungi" id="AAS54171">
    <property type="protein sequence ID" value="AAS54171"/>
    <property type="gene ID" value="AGOS_AGL320C"/>
</dbReference>
<dbReference type="GeneID" id="4622640"/>
<dbReference type="KEGG" id="ago:AGOS_AGL320C"/>
<dbReference type="eggNOG" id="KOG2387">
    <property type="taxonomic scope" value="Eukaryota"/>
</dbReference>
<dbReference type="HOGENOM" id="CLU_011675_5_0_1"/>
<dbReference type="InParanoid" id="Q751L7"/>
<dbReference type="OMA" id="EFNNAYR"/>
<dbReference type="OrthoDB" id="1739076at2759"/>
<dbReference type="UniPathway" id="UPA00159">
    <property type="reaction ID" value="UER00277"/>
</dbReference>
<dbReference type="Proteomes" id="UP000000591">
    <property type="component" value="Chromosome VII"/>
</dbReference>
<dbReference type="GO" id="GO:0097268">
    <property type="term" value="C:cytoophidium"/>
    <property type="evidence" value="ECO:0000318"/>
    <property type="project" value="GO_Central"/>
</dbReference>
<dbReference type="GO" id="GO:0005737">
    <property type="term" value="C:cytoplasm"/>
    <property type="evidence" value="ECO:0000318"/>
    <property type="project" value="GO_Central"/>
</dbReference>
<dbReference type="GO" id="GO:0005524">
    <property type="term" value="F:ATP binding"/>
    <property type="evidence" value="ECO:0007669"/>
    <property type="project" value="UniProtKB-KW"/>
</dbReference>
<dbReference type="GO" id="GO:0003883">
    <property type="term" value="F:CTP synthase activity"/>
    <property type="evidence" value="ECO:0000318"/>
    <property type="project" value="GO_Central"/>
</dbReference>
<dbReference type="GO" id="GO:0042802">
    <property type="term" value="F:identical protein binding"/>
    <property type="evidence" value="ECO:0000318"/>
    <property type="project" value="GO_Central"/>
</dbReference>
<dbReference type="GO" id="GO:0044210">
    <property type="term" value="P:'de novo' CTP biosynthetic process"/>
    <property type="evidence" value="ECO:0007669"/>
    <property type="project" value="UniProtKB-UniPathway"/>
</dbReference>
<dbReference type="GO" id="GO:0006241">
    <property type="term" value="P:CTP biosynthetic process"/>
    <property type="evidence" value="ECO:0000318"/>
    <property type="project" value="GO_Central"/>
</dbReference>
<dbReference type="GO" id="GO:0019856">
    <property type="term" value="P:pyrimidine nucleobase biosynthetic process"/>
    <property type="evidence" value="ECO:0000318"/>
    <property type="project" value="GO_Central"/>
</dbReference>
<dbReference type="CDD" id="cd03113">
    <property type="entry name" value="CTPS_N"/>
    <property type="match status" value="1"/>
</dbReference>
<dbReference type="CDD" id="cd01746">
    <property type="entry name" value="GATase1_CTP_Synthase"/>
    <property type="match status" value="1"/>
</dbReference>
<dbReference type="FunFam" id="3.40.50.300:FF:000207">
    <property type="entry name" value="CTP synthase"/>
    <property type="match status" value="1"/>
</dbReference>
<dbReference type="FunFam" id="3.40.50.880:FF:000005">
    <property type="entry name" value="CTP synthase"/>
    <property type="match status" value="1"/>
</dbReference>
<dbReference type="Gene3D" id="3.40.50.880">
    <property type="match status" value="1"/>
</dbReference>
<dbReference type="Gene3D" id="3.40.50.300">
    <property type="entry name" value="P-loop containing nucleotide triphosphate hydrolases"/>
    <property type="match status" value="1"/>
</dbReference>
<dbReference type="InterPro" id="IPR029062">
    <property type="entry name" value="Class_I_gatase-like"/>
</dbReference>
<dbReference type="InterPro" id="IPR004468">
    <property type="entry name" value="CTP_synthase"/>
</dbReference>
<dbReference type="InterPro" id="IPR017456">
    <property type="entry name" value="CTP_synthase_N"/>
</dbReference>
<dbReference type="InterPro" id="IPR017926">
    <property type="entry name" value="GATASE"/>
</dbReference>
<dbReference type="InterPro" id="IPR033828">
    <property type="entry name" value="GATase1_CTP_Synthase"/>
</dbReference>
<dbReference type="InterPro" id="IPR027417">
    <property type="entry name" value="P-loop_NTPase"/>
</dbReference>
<dbReference type="NCBIfam" id="NF003792">
    <property type="entry name" value="PRK05380.1"/>
    <property type="match status" value="1"/>
</dbReference>
<dbReference type="NCBIfam" id="TIGR00337">
    <property type="entry name" value="PyrG"/>
    <property type="match status" value="1"/>
</dbReference>
<dbReference type="PANTHER" id="PTHR11550">
    <property type="entry name" value="CTP SYNTHASE"/>
    <property type="match status" value="1"/>
</dbReference>
<dbReference type="PANTHER" id="PTHR11550:SF0">
    <property type="entry name" value="CTP SYNTHASE-RELATED"/>
    <property type="match status" value="1"/>
</dbReference>
<dbReference type="Pfam" id="PF06418">
    <property type="entry name" value="CTP_synth_N"/>
    <property type="match status" value="1"/>
</dbReference>
<dbReference type="Pfam" id="PF00117">
    <property type="entry name" value="GATase"/>
    <property type="match status" value="1"/>
</dbReference>
<dbReference type="SUPFAM" id="SSF52317">
    <property type="entry name" value="Class I glutamine amidotransferase-like"/>
    <property type="match status" value="1"/>
</dbReference>
<dbReference type="SUPFAM" id="SSF52540">
    <property type="entry name" value="P-loop containing nucleoside triphosphate hydrolases"/>
    <property type="match status" value="1"/>
</dbReference>
<dbReference type="PROSITE" id="PS51273">
    <property type="entry name" value="GATASE_TYPE_1"/>
    <property type="match status" value="1"/>
</dbReference>
<sequence>MKYVVVSGGVISGIGKGVLASSTGMLLKTLGLKVTSIKIDPYMNLDAGTMSPLEHGECFVLNDGGETDLDLGNYERYLGVTLTKDHNITTGKVYSHVMAKERKGDYLGKTVQVVPHLTNAIQDWLERVARIPVDDSGMEPDVCIIELGGTVGDIESAPFVEALRQFQFRVGRDNFALIHVSLVPVIHGEQKTKPTQAAIKDLRSLGLTPDMIACRCSEELDKPTIEKIAMFCHVGPEQVVNVHDVASTYHVPLLLLEQRMIDYLGQRLKLSDIKLGAEDKERGARLLDRWRHLTTAIDESFEVVQIALVGKYTHLKDSYLSVIKALEHSSMRCKRKLEIVWVEASDLEPEMSASDKEKFQQAWKSLSSSDGILVPGGFGTRGTEGMILAAKWARENKIPYLGVCLGLQVATIEFARHVLGIADATSSEFYPEVAEDKQVVVYMPEIDKQNMGGTMRLGLRPTIFQEDTDWSIIRKLYGSASSVEERHRHRYEINPKMVQKLEEHGLKFVGRDETGTRCEILELVDHPYYVATQYHPEYMSKVLDPSQPFLGLVAAAANILPSLLAAERAVGARADF</sequence>
<reference key="1">
    <citation type="journal article" date="2004" name="Science">
        <title>The Ashbya gossypii genome as a tool for mapping the ancient Saccharomyces cerevisiae genome.</title>
        <authorList>
            <person name="Dietrich F.S."/>
            <person name="Voegeli S."/>
            <person name="Brachat S."/>
            <person name="Lerch A."/>
            <person name="Gates K."/>
            <person name="Steiner S."/>
            <person name="Mohr C."/>
            <person name="Poehlmann R."/>
            <person name="Luedi P."/>
            <person name="Choi S."/>
            <person name="Wing R.A."/>
            <person name="Flavier A."/>
            <person name="Gaffney T.D."/>
            <person name="Philippsen P."/>
        </authorList>
    </citation>
    <scope>NUCLEOTIDE SEQUENCE [LARGE SCALE GENOMIC DNA]</scope>
    <source>
        <strain>ATCC 10895 / CBS 109.51 / FGSC 9923 / NRRL Y-1056</strain>
    </source>
</reference>
<reference key="2">
    <citation type="journal article" date="2013" name="G3 (Bethesda)">
        <title>Genomes of Ashbya fungi isolated from insects reveal four mating-type loci, numerous translocations, lack of transposons, and distinct gene duplications.</title>
        <authorList>
            <person name="Dietrich F.S."/>
            <person name="Voegeli S."/>
            <person name="Kuo S."/>
            <person name="Philippsen P."/>
        </authorList>
    </citation>
    <scope>GENOME REANNOTATION</scope>
    <source>
        <strain>ATCC 10895 / CBS 109.51 / FGSC 9923 / NRRL Y-1056</strain>
    </source>
</reference>
<name>PYRG_EREGS</name>
<gene>
    <name type="primary">URA7</name>
    <name type="ordered locus">AGL320C</name>
</gene>
<accession>Q751L7</accession>
<feature type="chain" id="PRO_0000138278" description="CTP synthase">
    <location>
        <begin position="1"/>
        <end position="576"/>
    </location>
</feature>
<feature type="domain" description="Glutamine amidotransferase type-1" evidence="1">
    <location>
        <begin position="305"/>
        <end position="559"/>
    </location>
</feature>
<feature type="active site" description="For GATase activity" evidence="1">
    <location>
        <position position="404"/>
    </location>
</feature>
<feature type="active site" description="For GATase activity" evidence="1">
    <location>
        <position position="535"/>
    </location>
</feature>
<feature type="active site" description="For GATase activity" evidence="1">
    <location>
        <position position="537"/>
    </location>
</feature>